<reference evidence="15" key="1">
    <citation type="journal article" date="1998" name="Genetics">
        <title>skittles, a Drosophila phosphatidylinositol 4-phosphate 5-kinase, is required for cell viability, germline development and bristle morphology, but not for neurotransmitter release.</title>
        <authorList>
            <person name="Hassan B.A."/>
            <person name="Prokopenko S.N."/>
            <person name="Breuer S."/>
            <person name="Zhang B."/>
            <person name="Paululat A."/>
            <person name="Bellen H.J."/>
        </authorList>
    </citation>
    <scope>NUCLEOTIDE SEQUENCE [MRNA]</scope>
    <scope>FUNCTION</scope>
    <scope>DEVELOPMENTAL STAGE</scope>
    <scope>DISRUPTION PHENOTYPE</scope>
</reference>
<reference evidence="18" key="2">
    <citation type="journal article" date="2000" name="Science">
        <title>The genome sequence of Drosophila melanogaster.</title>
        <authorList>
            <person name="Adams M.D."/>
            <person name="Celniker S.E."/>
            <person name="Holt R.A."/>
            <person name="Evans C.A."/>
            <person name="Gocayne J.D."/>
            <person name="Amanatides P.G."/>
            <person name="Scherer S.E."/>
            <person name="Li P.W."/>
            <person name="Hoskins R.A."/>
            <person name="Galle R.F."/>
            <person name="George R.A."/>
            <person name="Lewis S.E."/>
            <person name="Richards S."/>
            <person name="Ashburner M."/>
            <person name="Henderson S.N."/>
            <person name="Sutton G.G."/>
            <person name="Wortman J.R."/>
            <person name="Yandell M.D."/>
            <person name="Zhang Q."/>
            <person name="Chen L.X."/>
            <person name="Brandon R.C."/>
            <person name="Rogers Y.-H.C."/>
            <person name="Blazej R.G."/>
            <person name="Champe M."/>
            <person name="Pfeiffer B.D."/>
            <person name="Wan K.H."/>
            <person name="Doyle C."/>
            <person name="Baxter E.G."/>
            <person name="Helt G."/>
            <person name="Nelson C.R."/>
            <person name="Miklos G.L.G."/>
            <person name="Abril J.F."/>
            <person name="Agbayani A."/>
            <person name="An H.-J."/>
            <person name="Andrews-Pfannkoch C."/>
            <person name="Baldwin D."/>
            <person name="Ballew R.M."/>
            <person name="Basu A."/>
            <person name="Baxendale J."/>
            <person name="Bayraktaroglu L."/>
            <person name="Beasley E.M."/>
            <person name="Beeson K.Y."/>
            <person name="Benos P.V."/>
            <person name="Berman B.P."/>
            <person name="Bhandari D."/>
            <person name="Bolshakov S."/>
            <person name="Borkova D."/>
            <person name="Botchan M.R."/>
            <person name="Bouck J."/>
            <person name="Brokstein P."/>
            <person name="Brottier P."/>
            <person name="Burtis K.C."/>
            <person name="Busam D.A."/>
            <person name="Butler H."/>
            <person name="Cadieu E."/>
            <person name="Center A."/>
            <person name="Chandra I."/>
            <person name="Cherry J.M."/>
            <person name="Cawley S."/>
            <person name="Dahlke C."/>
            <person name="Davenport L.B."/>
            <person name="Davies P."/>
            <person name="de Pablos B."/>
            <person name="Delcher A."/>
            <person name="Deng Z."/>
            <person name="Mays A.D."/>
            <person name="Dew I."/>
            <person name="Dietz S.M."/>
            <person name="Dodson K."/>
            <person name="Doup L.E."/>
            <person name="Downes M."/>
            <person name="Dugan-Rocha S."/>
            <person name="Dunkov B.C."/>
            <person name="Dunn P."/>
            <person name="Durbin K.J."/>
            <person name="Evangelista C.C."/>
            <person name="Ferraz C."/>
            <person name="Ferriera S."/>
            <person name="Fleischmann W."/>
            <person name="Fosler C."/>
            <person name="Gabrielian A.E."/>
            <person name="Garg N.S."/>
            <person name="Gelbart W.M."/>
            <person name="Glasser K."/>
            <person name="Glodek A."/>
            <person name="Gong F."/>
            <person name="Gorrell J.H."/>
            <person name="Gu Z."/>
            <person name="Guan P."/>
            <person name="Harris M."/>
            <person name="Harris N.L."/>
            <person name="Harvey D.A."/>
            <person name="Heiman T.J."/>
            <person name="Hernandez J.R."/>
            <person name="Houck J."/>
            <person name="Hostin D."/>
            <person name="Houston K.A."/>
            <person name="Howland T.J."/>
            <person name="Wei M.-H."/>
            <person name="Ibegwam C."/>
            <person name="Jalali M."/>
            <person name="Kalush F."/>
            <person name="Karpen G.H."/>
            <person name="Ke Z."/>
            <person name="Kennison J.A."/>
            <person name="Ketchum K.A."/>
            <person name="Kimmel B.E."/>
            <person name="Kodira C.D."/>
            <person name="Kraft C.L."/>
            <person name="Kravitz S."/>
            <person name="Kulp D."/>
            <person name="Lai Z."/>
            <person name="Lasko P."/>
            <person name="Lei Y."/>
            <person name="Levitsky A.A."/>
            <person name="Li J.H."/>
            <person name="Li Z."/>
            <person name="Liang Y."/>
            <person name="Lin X."/>
            <person name="Liu X."/>
            <person name="Mattei B."/>
            <person name="McIntosh T.C."/>
            <person name="McLeod M.P."/>
            <person name="McPherson D."/>
            <person name="Merkulov G."/>
            <person name="Milshina N.V."/>
            <person name="Mobarry C."/>
            <person name="Morris J."/>
            <person name="Moshrefi A."/>
            <person name="Mount S.M."/>
            <person name="Moy M."/>
            <person name="Murphy B."/>
            <person name="Murphy L."/>
            <person name="Muzny D.M."/>
            <person name="Nelson D.L."/>
            <person name="Nelson D.R."/>
            <person name="Nelson K.A."/>
            <person name="Nixon K."/>
            <person name="Nusskern D.R."/>
            <person name="Pacleb J.M."/>
            <person name="Palazzolo M."/>
            <person name="Pittman G.S."/>
            <person name="Pan S."/>
            <person name="Pollard J."/>
            <person name="Puri V."/>
            <person name="Reese M.G."/>
            <person name="Reinert K."/>
            <person name="Remington K."/>
            <person name="Saunders R.D.C."/>
            <person name="Scheeler F."/>
            <person name="Shen H."/>
            <person name="Shue B.C."/>
            <person name="Siden-Kiamos I."/>
            <person name="Simpson M."/>
            <person name="Skupski M.P."/>
            <person name="Smith T.J."/>
            <person name="Spier E."/>
            <person name="Spradling A.C."/>
            <person name="Stapleton M."/>
            <person name="Strong R."/>
            <person name="Sun E."/>
            <person name="Svirskas R."/>
            <person name="Tector C."/>
            <person name="Turner R."/>
            <person name="Venter E."/>
            <person name="Wang A.H."/>
            <person name="Wang X."/>
            <person name="Wang Z.-Y."/>
            <person name="Wassarman D.A."/>
            <person name="Weinstock G.M."/>
            <person name="Weissenbach J."/>
            <person name="Williams S.M."/>
            <person name="Woodage T."/>
            <person name="Worley K.C."/>
            <person name="Wu D."/>
            <person name="Yang S."/>
            <person name="Yao Q.A."/>
            <person name="Ye J."/>
            <person name="Yeh R.-F."/>
            <person name="Zaveri J.S."/>
            <person name="Zhan M."/>
            <person name="Zhang G."/>
            <person name="Zhao Q."/>
            <person name="Zheng L."/>
            <person name="Zheng X.H."/>
            <person name="Zhong F.N."/>
            <person name="Zhong W."/>
            <person name="Zhou X."/>
            <person name="Zhu S.C."/>
            <person name="Zhu X."/>
            <person name="Smith H.O."/>
            <person name="Gibbs R.A."/>
            <person name="Myers E.W."/>
            <person name="Rubin G.M."/>
            <person name="Venter J.C."/>
        </authorList>
    </citation>
    <scope>NUCLEOTIDE SEQUENCE [LARGE SCALE GENOMIC DNA]</scope>
    <source>
        <strain evidence="18">Berkeley</strain>
    </source>
</reference>
<reference evidence="18" key="3">
    <citation type="journal article" date="2002" name="Genome Biol.">
        <title>Annotation of the Drosophila melanogaster euchromatic genome: a systematic review.</title>
        <authorList>
            <person name="Misra S."/>
            <person name="Crosby M.A."/>
            <person name="Mungall C.J."/>
            <person name="Matthews B.B."/>
            <person name="Campbell K.S."/>
            <person name="Hradecky P."/>
            <person name="Huang Y."/>
            <person name="Kaminker J.S."/>
            <person name="Millburn G.H."/>
            <person name="Prochnik S.E."/>
            <person name="Smith C.D."/>
            <person name="Tupy J.L."/>
            <person name="Whitfield E.J."/>
            <person name="Bayraktaroglu L."/>
            <person name="Berman B.P."/>
            <person name="Bettencourt B.R."/>
            <person name="Celniker S.E."/>
            <person name="de Grey A.D.N.J."/>
            <person name="Drysdale R.A."/>
            <person name="Harris N.L."/>
            <person name="Richter J."/>
            <person name="Russo S."/>
            <person name="Schroeder A.J."/>
            <person name="Shu S.Q."/>
            <person name="Stapleton M."/>
            <person name="Yamada C."/>
            <person name="Ashburner M."/>
            <person name="Gelbart W.M."/>
            <person name="Rubin G.M."/>
            <person name="Lewis S.E."/>
        </authorList>
    </citation>
    <scope>GENOME REANNOTATION</scope>
    <source>
        <strain evidence="18">Berkeley</strain>
    </source>
</reference>
<reference evidence="16" key="4">
    <citation type="journal article" date="2002" name="Genome Biol.">
        <title>A Drosophila full-length cDNA resource.</title>
        <authorList>
            <person name="Stapleton M."/>
            <person name="Carlson J.W."/>
            <person name="Brokstein P."/>
            <person name="Yu C."/>
            <person name="Champe M."/>
            <person name="George R.A."/>
            <person name="Guarin H."/>
            <person name="Kronmiller B."/>
            <person name="Pacleb J.M."/>
            <person name="Park S."/>
            <person name="Wan K.H."/>
            <person name="Rubin G.M."/>
            <person name="Celniker S.E."/>
        </authorList>
    </citation>
    <scope>NUCLEOTIDE SEQUENCE [LARGE SCALE MRNA]</scope>
    <source>
        <strain evidence="16">Berkeley</strain>
        <tissue>Larva</tissue>
        <tissue evidence="16">Pupae</tissue>
    </source>
</reference>
<reference evidence="14" key="5">
    <citation type="journal article" date="1997" name="Dev. Genes Evol.">
        <title>Expression of the PI4P 5-kinase Drosophila homologue skittles in the germline suggests a role in spermatogenesis and oogenesis.</title>
        <authorList>
            <person name="Knirr S."/>
            <person name="Santel A."/>
            <person name="Renkawitz-Pohl R."/>
        </authorList>
    </citation>
    <scope>NUCLEOTIDE SEQUENCE [GENOMIC DNA] OF 220-792</scope>
    <scope>DEVELOPMENTAL STAGE</scope>
</reference>
<reference evidence="13" key="6">
    <citation type="journal article" date="2004" name="Genetics">
        <title>The direct interaction between ASH2, a Drosophila trithorax group protein, and SKTL, a nuclear phosphatidylinositol 4-phosphate 5-kinase, implies a role for phosphatidylinositol 4,5-bisphosphate in maintaining transcriptionally active chromatin.</title>
        <authorList>
            <person name="Cheng M.K."/>
            <person name="Shearn A."/>
        </authorList>
    </citation>
    <scope>FUNCTION</scope>
    <scope>INTERACTION WITH ASH2</scope>
    <scope>SUBCELLULAR LOCATION</scope>
</reference>
<reference evidence="13" key="7">
    <citation type="journal article" date="2008" name="Development">
        <title>PIP5K-dependent production of PIP2 sustains microtubule organization to establish polarized transport in the Drosophila oocyte.</title>
        <authorList>
            <person name="Gervais L."/>
            <person name="Claret S."/>
            <person name="Januschke J."/>
            <person name="Roth S."/>
            <person name="Guichet A."/>
        </authorList>
    </citation>
    <scope>FUNCTION</scope>
    <scope>CATALYTIC ACTIVITY</scope>
    <scope>SUBCELLULAR LOCATION</scope>
    <scope>DEVELOPMENTAL STAGE</scope>
</reference>
<reference evidence="13" key="8">
    <citation type="journal article" date="2010" name="Mol. Biol. Cell">
        <title>Phosphatidylinositol 4,5-bisphosphate directs spermatid cell polarity and exocyst localization in Drosophila.</title>
        <authorList>
            <person name="Fabian L."/>
            <person name="Wei H.C."/>
            <person name="Rollins J."/>
            <person name="Noguchi T."/>
            <person name="Blankenship J.T."/>
            <person name="Bellamkonda K."/>
            <person name="Polevoy G."/>
            <person name="Gervais L."/>
            <person name="Guichet A."/>
            <person name="Fuller M.T."/>
            <person name="Brill J.A."/>
        </authorList>
    </citation>
    <scope>FUNCTION</scope>
    <scope>SUBCELLULAR LOCATION</scope>
</reference>
<reference evidence="13" key="9">
    <citation type="journal article" date="2013" name="Elife">
        <title>Apical targeting of the formin Diaphanous in Drosophila tubular epithelia.</title>
        <authorList>
            <person name="Rousso T."/>
            <person name="Shewan A.M."/>
            <person name="Mostov K.E."/>
            <person name="Schejter E.D."/>
            <person name="Shilo B.Z."/>
        </authorList>
    </citation>
    <scope>FUNCTION</scope>
    <scope>SUBCELLULAR LOCATION</scope>
</reference>
<reference evidence="13" key="10">
    <citation type="journal article" date="2014" name="Curr. Biol.">
        <title>PI(4,5)P2 produced by the PI4P5K SKTL controls apical size by tethering PAR-3 in Drosophila epithelial cells.</title>
        <authorList>
            <person name="Claret S."/>
            <person name="Jouette J."/>
            <person name="Benoit B."/>
            <person name="Legent K."/>
            <person name="Guichet A."/>
        </authorList>
    </citation>
    <scope>FUNCTION</scope>
    <scope>CATALYTIC ACTIVITY</scope>
</reference>
<reference evidence="13" key="11">
    <citation type="journal article" date="2019" name="Sci. Rep.">
        <title>Interplay between integrins and PI4P5K Sktl is crucial for cell polarization and reepithelialisation during Drosophila wound healing.</title>
        <authorList>
            <person name="Park S.H."/>
            <person name="Lee C.W."/>
            <person name="Choe K.M."/>
        </authorList>
    </citation>
    <scope>FUNCTION</scope>
    <scope>DEVELOPMENTAL STAGE</scope>
</reference>
<reference evidence="13" key="12">
    <citation type="journal article" date="2022" name="Cell. Mol. Life Sci.">
        <title>PI(4,5)P2 controls slit diaphragm formation and endocytosis in Drosophila nephrocytes.</title>
        <authorList>
            <person name="Gass M.M."/>
            <person name="Borkowsky S."/>
            <person name="Lotz M.L."/>
            <person name="Siwek R."/>
            <person name="Schroeter R."/>
            <person name="Nedvetsky P."/>
            <person name="Luschnig S."/>
            <person name="Rohlmann A."/>
            <person name="Missler M."/>
            <person name="Krahn M.P."/>
        </authorList>
    </citation>
    <scope>FUNCTION</scope>
</reference>
<protein>
    <recommendedName>
        <fullName evidence="13">Phosphatidylinositol 4-phosphate 5-kinase type-1 sktl</fullName>
        <ecNumber evidence="4 7">2.7.1.68</ecNumber>
    </recommendedName>
    <alternativeName>
        <fullName evidence="12">Protein Skittles</fullName>
    </alternativeName>
</protein>
<keyword id="KW-1003">Cell membrane</keyword>
<keyword id="KW-0966">Cell projection</keyword>
<keyword id="KW-0158">Chromosome</keyword>
<keyword id="KW-0969">Cilium</keyword>
<keyword id="KW-0963">Cytoplasm</keyword>
<keyword id="KW-0282">Flagellum</keyword>
<keyword id="KW-0418">Kinase</keyword>
<keyword id="KW-0443">Lipid metabolism</keyword>
<keyword id="KW-0472">Membrane</keyword>
<keyword id="KW-0539">Nucleus</keyword>
<keyword id="KW-1208">Phospholipid metabolism</keyword>
<keyword id="KW-1185">Reference proteome</keyword>
<keyword id="KW-0808">Transferase</keyword>
<sequence length="792" mass="87758">MDTRVELELEPVGKQDRLKDQPDDENEPLENQLELEQEHKSLLTPVKIPPAQTASPDQEATPSTPPPMSLQPGTSRQLFRDAAMAHGGQETTSLLQQELNNIAATQTPASKLRSASSTLDASISRNPSTTGGKHEKKLGHRRVAEGGEVTYKKIQSKQIMGSIQLGIQHTVGSLASKPKRDLLMNDFWEMETISFPPDGSSITPAHHYNDFRFKVYAPIAFRYFRDLFGIAPDDFLMSMCASPLRELSNPGASGSIFYLTTDDEFIIKTVQKKECEFLQKLLPGYYMNLSQNPRTLLPKFFGLYCFHYNSKNVRLVAMNNLLPSDIKMHCKYDLKGSSFRRKASKAERQKASPTFKDLDFAEHHPNGIFLETDKYNALMSTIKRDCMVLESFQIMDYSLLVGIHNLDLAAKEKREERILNARAKLQRKESAAQGPPSLNPDDDAPEADQNQLQAVASYASIPGTSAGAALNRTRSMNRQRLVAHSTALESITADMDVPLEEDEDVPAGGIPARSENDERLILYIGIIDILQSYRLEKKLEHTFKSILYNGDTVSVCRPSFYAKRFQDAMGKQVFKKTPTFPLKHSPSKRKTSTTQLRSPASRLPPLSTPTNAVRQPIMTMSGMSTPPPAFDDISEEDITAASTSSLQQQRSSNQSNNNRGETEVALREGNNTRGGSGEPSSTYHTQYSYDSSGRTGSALTSDYSDDESTGTDLSSRLPKLRTHRLTKTSVQVTTVGYVEGVDTPPKGGQDVVHADVNGKTTMTTTTMLTTTKTAHIQAPSYTSTLVLNDLPR</sequence>
<gene>
    <name evidence="17" type="primary">sktl</name>
    <name evidence="17" type="synonym">fam</name>
    <name evidence="17" type="synonym">l(2)05475</name>
    <name evidence="17" type="synonym">PIP5-kinase</name>
    <name evidence="17" type="synonym">PIP5K</name>
    <name evidence="17" type="ORF">CG9985</name>
</gene>
<feature type="chain" id="PRO_0000459583" description="Phosphatidylinositol 4-phosphate 5-kinase type-1 sktl">
    <location>
        <begin position="1"/>
        <end position="792"/>
    </location>
</feature>
<feature type="domain" description="PIPK" evidence="1">
    <location>
        <begin position="155"/>
        <end position="573"/>
    </location>
</feature>
<feature type="region of interest" description="Disordered" evidence="2">
    <location>
        <begin position="1"/>
        <end position="74"/>
    </location>
</feature>
<feature type="region of interest" description="Disordered" evidence="2">
    <location>
        <begin position="105"/>
        <end position="139"/>
    </location>
</feature>
<feature type="region of interest" description="Disordered" evidence="2">
    <location>
        <begin position="423"/>
        <end position="446"/>
    </location>
</feature>
<feature type="region of interest" description="Disordered" evidence="2">
    <location>
        <begin position="577"/>
        <end position="612"/>
    </location>
</feature>
<feature type="region of interest" description="Disordered" evidence="2">
    <location>
        <begin position="640"/>
        <end position="714"/>
    </location>
</feature>
<feature type="compositionally biased region" description="Basic and acidic residues" evidence="2">
    <location>
        <begin position="1"/>
        <end position="21"/>
    </location>
</feature>
<feature type="compositionally biased region" description="Polar residues" evidence="2">
    <location>
        <begin position="52"/>
        <end position="62"/>
    </location>
</feature>
<feature type="compositionally biased region" description="Polar residues" evidence="2">
    <location>
        <begin position="105"/>
        <end position="131"/>
    </location>
</feature>
<feature type="compositionally biased region" description="Low complexity" evidence="2">
    <location>
        <begin position="642"/>
        <end position="658"/>
    </location>
</feature>
<feature type="compositionally biased region" description="Polar residues" evidence="2">
    <location>
        <begin position="678"/>
        <end position="702"/>
    </location>
</feature>
<feature type="sequence conflict" description="In Ref. 1; AAC25576." evidence="13" ref="1">
    <original>E</original>
    <variation>EQE</variation>
    <location>
        <position position="38"/>
    </location>
</feature>
<feature type="sequence conflict" description="In Ref. 5; AAB18233 and 1; AAC25576." evidence="13" ref="5 1">
    <original>L</original>
    <variation>W</variation>
    <location>
        <position position="282"/>
    </location>
</feature>
<feature type="sequence conflict" description="In Ref. 5; AAB18233 and 1; AAC25576." evidence="13" ref="5 1">
    <original>A</original>
    <variation>S</variation>
    <location>
        <position position="377"/>
    </location>
</feature>
<evidence type="ECO:0000255" key="1">
    <source>
        <dbReference type="PROSITE-ProRule" id="PRU00781"/>
    </source>
</evidence>
<evidence type="ECO:0000256" key="2">
    <source>
        <dbReference type="SAM" id="MobiDB-lite"/>
    </source>
</evidence>
<evidence type="ECO:0000269" key="3">
    <source>
    </source>
</evidence>
<evidence type="ECO:0000269" key="4">
    <source>
    </source>
</evidence>
<evidence type="ECO:0000269" key="5">
    <source>
    </source>
</evidence>
<evidence type="ECO:0000269" key="6">
    <source>
    </source>
</evidence>
<evidence type="ECO:0000269" key="7">
    <source>
    </source>
</evidence>
<evidence type="ECO:0000269" key="8">
    <source>
    </source>
</evidence>
<evidence type="ECO:0000269" key="9">
    <source>
    </source>
</evidence>
<evidence type="ECO:0000269" key="10">
    <source>
    </source>
</evidence>
<evidence type="ECO:0000269" key="11">
    <source>
    </source>
</evidence>
<evidence type="ECO:0000303" key="12">
    <source>
    </source>
</evidence>
<evidence type="ECO:0000305" key="13"/>
<evidence type="ECO:0000312" key="14">
    <source>
        <dbReference type="EMBL" id="AAB18233.1"/>
    </source>
</evidence>
<evidence type="ECO:0000312" key="15">
    <source>
        <dbReference type="EMBL" id="AAC25576.1"/>
    </source>
</evidence>
<evidence type="ECO:0000312" key="16">
    <source>
        <dbReference type="EMBL" id="AAL13966.1"/>
    </source>
</evidence>
<evidence type="ECO:0000312" key="17">
    <source>
        <dbReference type="FlyBase" id="FBgn0016984"/>
    </source>
</evidence>
<evidence type="ECO:0000312" key="18">
    <source>
        <dbReference type="Proteomes" id="UP000000803"/>
    </source>
</evidence>
<accession>Q9W2R3</accession>
<accession>Q7JNK2</accession>
<accession>Q94544</accession>
<comment type="function">
    <text evidence="3 4 5 6 7 9 10 11">Catalyzes the phosphorylation of phosphatidylinositol 4-phosphate (PtdIns[4]P) to form phosphatidylinositol 4,5-bisphosphate (PtdIns[4,5]P(2)), a lipid second messenger that regulates several cellular processes such as signal transduction, vesicle trafficking, actin cytoskeleton dynamics, cell adhesion, and cell motility (PubMed:18948416, PubMed:24768049). PtdIns[4,5]P(2) can directly act as a second messenger or can be utilized as a precursor to generate other second messengers: inositol 1,4,5-trisphosphate (IP3), diacylglycerol (DAG) or phosphatidylinositol-3,4,5-trisphosphate (PtdIns[3,4,5]P(3)). Required for germline development during oogenesis (PubMed:9832529). Sktl is the major phosphatidylinositol 4-phosphate 5-kinase responsible for enrichment of PtdIns[4,5]P(2) in the apical plasma membrane of the oocyte and follicular epithelium cells of the egg chamber during oogenesis (PubMed:18948416, PubMed:24768049). Involved in nuclear anchoring and microtubule organization required for targeted mRNA transport during maintenance of oocyte polarity (PubMed:18948416). The PtdIns[4,5]P(2) produced by sktl is required for maintenance of cellular polarity, prevention of the epithelial-mesenchymal transition process, maintenance of adherens junctions and regulation of apical constriction, probably by affecting polarized cortical recruitment of PAR proteins and their effectors, including baz/bazooka, aPKC, par-1 and l(2)gl (PubMed:18948416, PubMed:24768049). Involved in actin cytoskeleton organization probably through PtdIns[4,5]P(2)-mediated regulation of Moe/Moesin phosphorylation (PubMed:18948416, PubMed:24768049). Involved in PtdIns[4,5]P(2)-mediated apical recruitment of the formin dia/diaphanous in tubular epithelial cells (PubMed:23853710). Involved in anterodorsal cell morphogenesis and eggshell dorsal appendage formation, probably through regulation of apical constriction by PtdIns[4,5]P(2) during tubulogenesis (PubMed:24768049). Required for cell viability or proliferation during wing and eye imaginal disk development (PubMed:9832529). May be involved in cytoskeletal regulation during sensory bristle development (PubMed:9832529). Together with mys/integrin beta localizes to the trailing edge of larval epidermal cells in a JNK signaling-dependent manner during wound healing and is required for setting up cell polarity and re-epithelialization (PubMed:31704968). Required for polarization of elongating spermatid cysts possibly by generation of PtdIns[4,5]P(2) involved in mediating membrane association and orientation of the nucleus-basal body pair (PubMed:20237161). Probably involved in PtdIns[4,5]P(2)-mediated recruitment of exocyst proteins that may mediate membrane addition during spermatid elongation (PubMed:20237161). Involved in maintenance of specialised cell contacts known as slit diaphragms required for nephrocyte morphogenesis and function (PubMed:35437696). Regulates nephrocyte endocytosis, possibly through PtdIns[4,5]P(2)-mediated recruitment of effector proteins (PubMed:35437696). Not required for nervous system development or neurotransmitter release at the neuromuscular junction (PubMed:9832529). Together with ash2 probably plays a role in maintenance of transcriptionally active chromatin through down-regulation of histone H1 hyperphosphorylation (PubMed:15280236).</text>
</comment>
<comment type="catalytic activity">
    <reaction evidence="4 7">
        <text>a 1,2-diacyl-sn-glycero-3-phospho-(1D-myo-inositol 4-phosphate) + ATP = a 1,2-diacyl-sn-glycero-3-phospho-(1D-myo-inositol-4,5-bisphosphate) + ADP + H(+)</text>
        <dbReference type="Rhea" id="RHEA:14425"/>
        <dbReference type="ChEBI" id="CHEBI:15378"/>
        <dbReference type="ChEBI" id="CHEBI:30616"/>
        <dbReference type="ChEBI" id="CHEBI:58178"/>
        <dbReference type="ChEBI" id="CHEBI:58456"/>
        <dbReference type="ChEBI" id="CHEBI:456216"/>
        <dbReference type="EC" id="2.7.1.68"/>
    </reaction>
</comment>
<comment type="subunit">
    <text evidence="3">Interacts with ash2 (via B30.2/SPRY domain); the interaction is direct and seems to be specific for ash2 isoform B.</text>
</comment>
<comment type="subcellular location">
    <subcellularLocation>
        <location evidence="4">Cytoplasm</location>
    </subcellularLocation>
    <subcellularLocation>
        <location evidence="4">Cytoplasm</location>
        <location evidence="4">Cell cortex</location>
    </subcellularLocation>
    <subcellularLocation>
        <location evidence="3">Nucleus</location>
    </subcellularLocation>
    <subcellularLocation>
        <location evidence="3">Chromosome</location>
    </subcellularLocation>
    <subcellularLocation>
        <location evidence="6">Apical cell membrane</location>
        <topology evidence="6">Peripheral membrane protein</topology>
        <orientation evidence="13">Cytoplasmic side</orientation>
    </subcellularLocation>
    <subcellularLocation>
        <location evidence="5">Cell projection</location>
        <location evidence="5">Cilium</location>
        <location evidence="5">Flagellum membrane</location>
    </subcellularLocation>
    <text evidence="3 5">Accumulation on polytene chromosomes requires ash2 (PubMed:15280236). During spermatogenesis localizes with, or near to, ring canals at the growing end of spermatid cysts in a PtdIns[4,5]P(2) dependent manner (PubMed:20237161).</text>
</comment>
<comment type="developmental stage">
    <text evidence="4 8 9 11">Expressed in larval epithelium (at protein level) (PubMed:31704968). Expressed during oogenesis (PubMed:27747405). First detected in a subset of cells in region 2 of the germarium (PubMed:27747405). Strongly expressed in the oocyte of stage S1 to S14 egg chambers (PubMed:27747405). Weak expression in nurse cells until stage S8, after which expression increases throughout the latter stages of oogenesis (PubMed:18948416, PubMed:27747405). Expressed during spermatogenesis in primary spermatocytes and during meiotic prophase (PubMed:27747405). Basal level expression in all cells during all stages of embryogenesis (PubMed:9832529). Highly expressed in the procephalic neuroectoderm at stage 5 of embryogenesis (PubMed:9832529). During gastrulation expressed in the brain with elevated expression in the invaginating cells of the ventral and cephalic furrows (PubMed:9832529). Highly expressed in migrating germ cells and all precursor cells of the central and peripheral nervous systems at stage 11 of embryogenesis (PubMed:9832529). At embryogenesis stage 13 expressed strongly in most developing tissues, including central and peripheral nervous systems, heart, gut and muscle (PubMed:9832529). At stage 17 of embryogenesis expressed strongly in gut, pharynx and a subset of cells of the central nervous system (PubMed:9832529). Expressed in all imaginal disks of third instar larvae (PubMed:9832529). Elevated expression in the precursor of the anterior wing margin sensory organs and along the anterior-posterior axis in the wing disks, but is absent along the dorso-ventral axis (PubMed:9832529). In eye disks expression is elevated in precursors of R8 photoreceptors (PubMed:9832529). Expressed in the outer proliferation center of the optic lobes, patches of the midbrain and a subset of cells in the ventral ganglion of the third instar larval brain (PubMed:9832529).</text>
</comment>
<comment type="disruption phenotype">
    <text evidence="11">Late embryonic lethal with no gross morphological defects.</text>
</comment>
<comment type="sequence caution" evidence="13">
    <conflict type="erroneous initiation">
        <sequence resource="EMBL-CDS" id="AAB18233"/>
    </conflict>
    <text>Truncated N-terminus.</text>
</comment>
<comment type="sequence caution" evidence="13">
    <conflict type="frameshift">
        <sequence resource="EMBL-CDS" id="AAB18233"/>
    </conflict>
</comment>
<comment type="sequence caution" evidence="13">
    <conflict type="frameshift">
        <sequence resource="EMBL-CDS" id="AAC25576"/>
    </conflict>
</comment>
<organism evidence="18">
    <name type="scientific">Drosophila melanogaster</name>
    <name type="common">Fruit fly</name>
    <dbReference type="NCBI Taxonomy" id="7227"/>
    <lineage>
        <taxon>Eukaryota</taxon>
        <taxon>Metazoa</taxon>
        <taxon>Ecdysozoa</taxon>
        <taxon>Arthropoda</taxon>
        <taxon>Hexapoda</taxon>
        <taxon>Insecta</taxon>
        <taxon>Pterygota</taxon>
        <taxon>Neoptera</taxon>
        <taxon>Endopterygota</taxon>
        <taxon>Diptera</taxon>
        <taxon>Brachycera</taxon>
        <taxon>Muscomorpha</taxon>
        <taxon>Ephydroidea</taxon>
        <taxon>Drosophilidae</taxon>
        <taxon>Drosophila</taxon>
        <taxon>Sophophora</taxon>
    </lineage>
</organism>
<name>PI5K1_DROME</name>
<dbReference type="EC" id="2.7.1.68" evidence="4 7"/>
<dbReference type="EMBL" id="AF071417">
    <property type="protein sequence ID" value="AAC25576.1"/>
    <property type="status" value="ALT_FRAME"/>
    <property type="molecule type" value="mRNA"/>
</dbReference>
<dbReference type="EMBL" id="AE013599">
    <property type="protein sequence ID" value="AAF46627.2"/>
    <property type="molecule type" value="Genomic_DNA"/>
</dbReference>
<dbReference type="EMBL" id="AE013599">
    <property type="protein sequence ID" value="AHN56441.1"/>
    <property type="molecule type" value="Genomic_DNA"/>
</dbReference>
<dbReference type="EMBL" id="AE013599">
    <property type="protein sequence ID" value="AHN56442.1"/>
    <property type="molecule type" value="Genomic_DNA"/>
</dbReference>
<dbReference type="EMBL" id="AY058737">
    <property type="protein sequence ID" value="AAL13966.1"/>
    <property type="molecule type" value="mRNA"/>
</dbReference>
<dbReference type="EMBL" id="U73490">
    <property type="protein sequence ID" value="AAB18233.1"/>
    <property type="status" value="ALT_SEQ"/>
    <property type="molecule type" value="Genomic_DNA"/>
</dbReference>
<dbReference type="RefSeq" id="NP_001286646.1">
    <property type="nucleotide sequence ID" value="NM_001299717.1"/>
</dbReference>
<dbReference type="RefSeq" id="NP_001286647.1">
    <property type="nucleotide sequence ID" value="NM_001299718.1"/>
</dbReference>
<dbReference type="RefSeq" id="NP_477206.1">
    <property type="nucleotide sequence ID" value="NM_057858.4"/>
</dbReference>
<dbReference type="SMR" id="Q9W2R3"/>
<dbReference type="FunCoup" id="Q9W2R3">
    <property type="interactions" value="911"/>
</dbReference>
<dbReference type="IntAct" id="Q9W2R3">
    <property type="interactions" value="3"/>
</dbReference>
<dbReference type="STRING" id="7227.FBpp0071491"/>
<dbReference type="PaxDb" id="7227-FBpp0071491"/>
<dbReference type="EnsemblMetazoa" id="FBtr0071563">
    <property type="protein sequence ID" value="FBpp0071491"/>
    <property type="gene ID" value="FBgn0016984"/>
</dbReference>
<dbReference type="EnsemblMetazoa" id="FBtr0342801">
    <property type="protein sequence ID" value="FBpp0309638"/>
    <property type="gene ID" value="FBgn0016984"/>
</dbReference>
<dbReference type="EnsemblMetazoa" id="FBtr0344196">
    <property type="protein sequence ID" value="FBpp0310605"/>
    <property type="gene ID" value="FBgn0016984"/>
</dbReference>
<dbReference type="GeneID" id="37356"/>
<dbReference type="KEGG" id="dme:Dmel_CG9985"/>
<dbReference type="UCSC" id="CG9985-RA">
    <property type="organism name" value="d. melanogaster"/>
</dbReference>
<dbReference type="AGR" id="FB:FBgn0016984"/>
<dbReference type="CTD" id="37356"/>
<dbReference type="FlyBase" id="FBgn0016984">
    <property type="gene designation" value="sktl"/>
</dbReference>
<dbReference type="VEuPathDB" id="VectorBase:FBgn0016984"/>
<dbReference type="eggNOG" id="KOG0229">
    <property type="taxonomic scope" value="Eukaryota"/>
</dbReference>
<dbReference type="GeneTree" id="ENSGT00940000154703"/>
<dbReference type="HOGENOM" id="CLU_004312_3_1_1"/>
<dbReference type="InParanoid" id="Q9W2R3"/>
<dbReference type="OMA" id="SMCASPM"/>
<dbReference type="OrthoDB" id="70770at2759"/>
<dbReference type="Reactome" id="R-DME-1660499">
    <property type="pathway name" value="Synthesis of PIPs at the plasma membrane"/>
</dbReference>
<dbReference type="Reactome" id="R-DME-201688">
    <property type="pathway name" value="WNT mediated activation of DVL"/>
</dbReference>
<dbReference type="Reactome" id="R-DME-6811558">
    <property type="pathway name" value="PI5P, PP2A and IER3 Regulate PI3K/AKT Signaling"/>
</dbReference>
<dbReference type="BioGRID-ORCS" id="37356">
    <property type="hits" value="0 hits in 3 CRISPR screens"/>
</dbReference>
<dbReference type="GenomeRNAi" id="37356"/>
<dbReference type="PRO" id="PR:Q9W2R3"/>
<dbReference type="Proteomes" id="UP000000803">
    <property type="component" value="Chromosome 2R"/>
</dbReference>
<dbReference type="Bgee" id="FBgn0016984">
    <property type="expression patterns" value="Expressed in adult abdominal pericardial cell (Drosophila) in dorsal vessel heart and 186 other cell types or tissues"/>
</dbReference>
<dbReference type="ExpressionAtlas" id="Q9W2R3">
    <property type="expression patterns" value="baseline and differential"/>
</dbReference>
<dbReference type="GO" id="GO:0016324">
    <property type="term" value="C:apical plasma membrane"/>
    <property type="evidence" value="ECO:0007669"/>
    <property type="project" value="UniProtKB-SubCell"/>
</dbReference>
<dbReference type="GO" id="GO:0005938">
    <property type="term" value="C:cell cortex"/>
    <property type="evidence" value="ECO:0000314"/>
    <property type="project" value="FlyBase"/>
</dbReference>
<dbReference type="GO" id="GO:0005694">
    <property type="term" value="C:chromosome"/>
    <property type="evidence" value="ECO:0007669"/>
    <property type="project" value="UniProtKB-SubCell"/>
</dbReference>
<dbReference type="GO" id="GO:0035323">
    <property type="term" value="C:male germline ring canal"/>
    <property type="evidence" value="ECO:0000314"/>
    <property type="project" value="FlyBase"/>
</dbReference>
<dbReference type="GO" id="GO:0031514">
    <property type="term" value="C:motile cilium"/>
    <property type="evidence" value="ECO:0007669"/>
    <property type="project" value="UniProtKB-KW"/>
</dbReference>
<dbReference type="GO" id="GO:0005634">
    <property type="term" value="C:nucleus"/>
    <property type="evidence" value="ECO:0007669"/>
    <property type="project" value="UniProtKB-SubCell"/>
</dbReference>
<dbReference type="GO" id="GO:0005886">
    <property type="term" value="C:plasma membrane"/>
    <property type="evidence" value="ECO:0000314"/>
    <property type="project" value="FlyBase"/>
</dbReference>
<dbReference type="GO" id="GO:0016308">
    <property type="term" value="F:1-phosphatidylinositol-4-phosphate 5-kinase activity"/>
    <property type="evidence" value="ECO:0000315"/>
    <property type="project" value="UniProtKB"/>
</dbReference>
<dbReference type="GO" id="GO:0003383">
    <property type="term" value="P:apical constriction"/>
    <property type="evidence" value="ECO:0000315"/>
    <property type="project" value="UniProtKB"/>
</dbReference>
<dbReference type="GO" id="GO:0071711">
    <property type="term" value="P:basement membrane organization"/>
    <property type="evidence" value="ECO:0000315"/>
    <property type="project" value="FlyBase"/>
</dbReference>
<dbReference type="GO" id="GO:0030866">
    <property type="term" value="P:cortical actin cytoskeleton organization"/>
    <property type="evidence" value="ECO:0000315"/>
    <property type="project" value="FlyBase"/>
</dbReference>
<dbReference type="GO" id="GO:0046843">
    <property type="term" value="P:dorsal appendage formation"/>
    <property type="evidence" value="ECO:0000315"/>
    <property type="project" value="UniProtKB"/>
</dbReference>
<dbReference type="GO" id="GO:0007032">
    <property type="term" value="P:endosome organization"/>
    <property type="evidence" value="ECO:0000315"/>
    <property type="project" value="FlyBase"/>
</dbReference>
<dbReference type="GO" id="GO:0001837">
    <property type="term" value="P:epithelial to mesenchymal transition"/>
    <property type="evidence" value="ECO:0000315"/>
    <property type="project" value="UniProtKB"/>
</dbReference>
<dbReference type="GO" id="GO:0071963">
    <property type="term" value="P:establishment or maintenance of cell polarity regulating cell shape"/>
    <property type="evidence" value="ECO:0000315"/>
    <property type="project" value="UniProtKB"/>
</dbReference>
<dbReference type="GO" id="GO:0030707">
    <property type="term" value="P:follicle cell of egg chamber development"/>
    <property type="evidence" value="ECO:0000315"/>
    <property type="project" value="UniProtKB"/>
</dbReference>
<dbReference type="GO" id="GO:0007444">
    <property type="term" value="P:imaginal disc development"/>
    <property type="evidence" value="ECO:0000315"/>
    <property type="project" value="UniProtKB"/>
</dbReference>
<dbReference type="GO" id="GO:0007310">
    <property type="term" value="P:oocyte dorsal/ventral axis specification"/>
    <property type="evidence" value="ECO:0000315"/>
    <property type="project" value="FlyBase"/>
</dbReference>
<dbReference type="GO" id="GO:0008103">
    <property type="term" value="P:oocyte microtubule cytoskeleton polarization"/>
    <property type="evidence" value="ECO:0000315"/>
    <property type="project" value="FlyBase"/>
</dbReference>
<dbReference type="GO" id="GO:0048477">
    <property type="term" value="P:oogenesis"/>
    <property type="evidence" value="ECO:0000315"/>
    <property type="project" value="UniProtKB"/>
</dbReference>
<dbReference type="GO" id="GO:0046854">
    <property type="term" value="P:phosphatidylinositol phosphate biosynthetic process"/>
    <property type="evidence" value="ECO:0000318"/>
    <property type="project" value="GO_Central"/>
</dbReference>
<dbReference type="GO" id="GO:0008104">
    <property type="term" value="P:protein localization"/>
    <property type="evidence" value="ECO:0000315"/>
    <property type="project" value="FlyBase"/>
</dbReference>
<dbReference type="GO" id="GO:1903689">
    <property type="term" value="P:regulation of wound healing, spreading of epidermal cells"/>
    <property type="evidence" value="ECO:0000315"/>
    <property type="project" value="UniProtKB"/>
</dbReference>
<dbReference type="GO" id="GO:0007286">
    <property type="term" value="P:spermatid development"/>
    <property type="evidence" value="ECO:0000315"/>
    <property type="project" value="FlyBase"/>
</dbReference>
<dbReference type="GO" id="GO:0007283">
    <property type="term" value="P:spermatogenesis"/>
    <property type="evidence" value="ECO:0000270"/>
    <property type="project" value="UniProtKB"/>
</dbReference>
<dbReference type="CDD" id="cd17301">
    <property type="entry name" value="PIPKc_PIP5KI"/>
    <property type="match status" value="1"/>
</dbReference>
<dbReference type="FunFam" id="3.30.800.10:FF:000001">
    <property type="entry name" value="phosphatidylinositol 4-phosphate 5-kinase type-1 gamma"/>
    <property type="match status" value="1"/>
</dbReference>
<dbReference type="Gene3D" id="3.30.810.10">
    <property type="entry name" value="2-Layer Sandwich"/>
    <property type="match status" value="1"/>
</dbReference>
<dbReference type="Gene3D" id="3.30.800.10">
    <property type="entry name" value="Phosphatidylinositol Phosphate Kinase II Beta"/>
    <property type="match status" value="1"/>
</dbReference>
<dbReference type="InterPro" id="IPR027483">
    <property type="entry name" value="PInositol-4-P-4/5-kinase_C_sf"/>
</dbReference>
<dbReference type="InterPro" id="IPR002498">
    <property type="entry name" value="PInositol-4-P-4/5-kinase_core"/>
</dbReference>
<dbReference type="InterPro" id="IPR027484">
    <property type="entry name" value="PInositol-4-P-5-kinase_N"/>
</dbReference>
<dbReference type="InterPro" id="IPR023610">
    <property type="entry name" value="PInositol-4/5-P-5/4-kinase"/>
</dbReference>
<dbReference type="PANTHER" id="PTHR23086:SF101">
    <property type="entry name" value="LP03320P-RELATED"/>
    <property type="match status" value="1"/>
</dbReference>
<dbReference type="PANTHER" id="PTHR23086">
    <property type="entry name" value="PHOSPHATIDYLINOSITOL-4-PHOSPHATE 5-KINASE"/>
    <property type="match status" value="1"/>
</dbReference>
<dbReference type="Pfam" id="PF01504">
    <property type="entry name" value="PIP5K"/>
    <property type="match status" value="1"/>
</dbReference>
<dbReference type="SMART" id="SM00330">
    <property type="entry name" value="PIPKc"/>
    <property type="match status" value="1"/>
</dbReference>
<dbReference type="SUPFAM" id="SSF56104">
    <property type="entry name" value="SAICAR synthase-like"/>
    <property type="match status" value="1"/>
</dbReference>
<dbReference type="PROSITE" id="PS51455">
    <property type="entry name" value="PIPK"/>
    <property type="match status" value="1"/>
</dbReference>
<proteinExistence type="evidence at protein level"/>